<organism>
    <name type="scientific">Caenorhabditis briggsae</name>
    <dbReference type="NCBI Taxonomy" id="6238"/>
    <lineage>
        <taxon>Eukaryota</taxon>
        <taxon>Metazoa</taxon>
        <taxon>Ecdysozoa</taxon>
        <taxon>Nematoda</taxon>
        <taxon>Chromadorea</taxon>
        <taxon>Rhabditida</taxon>
        <taxon>Rhabditina</taxon>
        <taxon>Rhabditomorpha</taxon>
        <taxon>Rhabditoidea</taxon>
        <taxon>Rhabditidae</taxon>
        <taxon>Peloderinae</taxon>
        <taxon>Caenorhabditis</taxon>
    </lineage>
</organism>
<reference key="1">
    <citation type="journal article" date="2003" name="PLoS Biol.">
        <title>The genome sequence of Caenorhabditis briggsae: a platform for comparative genomics.</title>
        <authorList>
            <person name="Stein L.D."/>
            <person name="Bao Z."/>
            <person name="Blasiar D."/>
            <person name="Blumenthal T."/>
            <person name="Brent M.R."/>
            <person name="Chen N."/>
            <person name="Chinwalla A."/>
            <person name="Clarke L."/>
            <person name="Clee C."/>
            <person name="Coghlan A."/>
            <person name="Coulson A."/>
            <person name="D'Eustachio P."/>
            <person name="Fitch D.H.A."/>
            <person name="Fulton L.A."/>
            <person name="Fulton R.E."/>
            <person name="Griffiths-Jones S."/>
            <person name="Harris T.W."/>
            <person name="Hillier L.W."/>
            <person name="Kamath R."/>
            <person name="Kuwabara P.E."/>
            <person name="Mardis E.R."/>
            <person name="Marra M.A."/>
            <person name="Miner T.L."/>
            <person name="Minx P."/>
            <person name="Mullikin J.C."/>
            <person name="Plumb R.W."/>
            <person name="Rogers J."/>
            <person name="Schein J.E."/>
            <person name="Sohrmann M."/>
            <person name="Spieth J."/>
            <person name="Stajich J.E."/>
            <person name="Wei C."/>
            <person name="Willey D."/>
            <person name="Wilson R.K."/>
            <person name="Durbin R.M."/>
            <person name="Waterston R.H."/>
        </authorList>
    </citation>
    <scope>NUCLEOTIDE SEQUENCE [LARGE SCALE GENOMIC DNA]</scope>
    <source>
        <strain>AF16</strain>
    </source>
</reference>
<protein>
    <recommendedName>
        <fullName>Signal transducer and activator of transcription 1</fullName>
    </recommendedName>
</protein>
<gene>
    <name evidence="3" type="primary">sta-1</name>
    <name type="ORF">CBG13675</name>
</gene>
<keyword id="KW-0010">Activator</keyword>
<keyword id="KW-0963">Cytoplasm</keyword>
<keyword id="KW-0217">Developmental protein</keyword>
<keyword id="KW-0238">DNA-binding</keyword>
<keyword id="KW-0539">Nucleus</keyword>
<keyword id="KW-0597">Phosphoprotein</keyword>
<keyword id="KW-1185">Reference proteome</keyword>
<keyword id="KW-0727">SH2 domain</keyword>
<keyword id="KW-0804">Transcription</keyword>
<keyword id="KW-0805">Transcription regulation</keyword>
<feature type="chain" id="PRO_0000234103" description="Signal transducer and activator of transcription 1">
    <location>
        <begin position="1"/>
        <end position="713"/>
    </location>
</feature>
<feature type="domain" description="SH2" evidence="4">
    <location>
        <begin position="477"/>
        <end position="574"/>
    </location>
</feature>
<sequence>MMGSSSQELQTALTDISKTCHHMWEDSKDLQGRFVNDLAELQRLQCTITNFERAQHPEQAFQAKQAMTEMQKKATGVYEMLAQRRNEIISKLNDGANIASMMQGQLINDKLFTWKNAQKLAQIGMPFDDREQLLDEIQLEFEFLADNIWQLNMFACWMCDLCRRAPQLNDGLAQSSAAKLTTISEQLNRLLFVLVSQSFIVSVQPEPVLKTQHKFVTEVRLLIGDKLGIRQQLMNTNVSVKIIAEDEARVMSVDCDAQKEIRANKQVGSISNDFEKLTMDERGHLSAKFNNSKLTRIAHRKPPPKGASDMKCAANMQAATDQKYALLFFITPFQMGNLSKEEQLDVWTLSLPIMVTVHGSQDCDAQVAILWHRAFASISRDPNVHDVTAVSWENLAIMLRNKFSLFTGARRPLSESDLAYLSEKIIIPNMPDQKPITFTRFAKQAMREELAFSFWEWFFSIMQLIKQKLLKYWDEGWCIGFISKHDASQSMCMLPNTSFLLRFSDTQTGAVSIGFVCQDDDGQKVPFHLSPLTIKDLDQLSLASRIASCPQLKDIRYMYPNIDKEEMLRYFESEERHRVGGPESPGGYIQSEIVMVAKTNGNFRRASAAPSMFGADSPSPLSIQSKLDWSPGEIHQSMMEMTDELGHVLNVGGMDSMHPDANTLLGPAFKNPTFHPHDQQQHLQFVDMSHPQMMQQQHHGHNHNHTHNQFYPS</sequence>
<evidence type="ECO:0000250" key="1"/>
<evidence type="ECO:0000250" key="2">
    <source>
        <dbReference type="UniProtKB" id="P51692"/>
    </source>
</evidence>
<evidence type="ECO:0000250" key="3">
    <source>
        <dbReference type="UniProtKB" id="Q9NAD6"/>
    </source>
</evidence>
<evidence type="ECO:0000255" key="4"/>
<dbReference type="EMBL" id="HE600943">
    <property type="protein sequence ID" value="CAP32439.2"/>
    <property type="molecule type" value="Genomic_DNA"/>
</dbReference>
<dbReference type="SMR" id="Q61AP6"/>
<dbReference type="FunCoup" id="Q61AP6">
    <property type="interactions" value="2000"/>
</dbReference>
<dbReference type="STRING" id="6238.Q61AP6"/>
<dbReference type="EnsemblMetazoa" id="CBG13675a.1">
    <property type="protein sequence ID" value="CBG13675a.1"/>
    <property type="gene ID" value="WBGene00034409"/>
</dbReference>
<dbReference type="WormBase" id="CBG13675a">
    <property type="protein sequence ID" value="CBP37584"/>
    <property type="gene ID" value="WBGene00034409"/>
    <property type="gene designation" value="Cbr-sta-1"/>
</dbReference>
<dbReference type="eggNOG" id="KOG3667">
    <property type="taxonomic scope" value="Eukaryota"/>
</dbReference>
<dbReference type="HOGENOM" id="CLU_014189_4_0_1"/>
<dbReference type="InParanoid" id="Q61AP6"/>
<dbReference type="OMA" id="YHAATTH"/>
<dbReference type="Proteomes" id="UP000008549">
    <property type="component" value="Unassembled WGS sequence"/>
</dbReference>
<dbReference type="GO" id="GO:0005737">
    <property type="term" value="C:cytoplasm"/>
    <property type="evidence" value="ECO:0000318"/>
    <property type="project" value="GO_Central"/>
</dbReference>
<dbReference type="GO" id="GO:0005634">
    <property type="term" value="C:nucleus"/>
    <property type="evidence" value="ECO:0000318"/>
    <property type="project" value="GO_Central"/>
</dbReference>
<dbReference type="GO" id="GO:0000981">
    <property type="term" value="F:DNA-binding transcription factor activity, RNA polymerase II-specific"/>
    <property type="evidence" value="ECO:0000318"/>
    <property type="project" value="GO_Central"/>
</dbReference>
<dbReference type="GO" id="GO:0000978">
    <property type="term" value="F:RNA polymerase II cis-regulatory region sequence-specific DNA binding"/>
    <property type="evidence" value="ECO:0000318"/>
    <property type="project" value="GO_Central"/>
</dbReference>
<dbReference type="GO" id="GO:0007259">
    <property type="term" value="P:cell surface receptor signaling pathway via JAK-STAT"/>
    <property type="evidence" value="ECO:0000318"/>
    <property type="project" value="GO_Central"/>
</dbReference>
<dbReference type="GO" id="GO:0006952">
    <property type="term" value="P:defense response"/>
    <property type="evidence" value="ECO:0000318"/>
    <property type="project" value="GO_Central"/>
</dbReference>
<dbReference type="GO" id="GO:0042127">
    <property type="term" value="P:regulation of cell population proliferation"/>
    <property type="evidence" value="ECO:0000318"/>
    <property type="project" value="GO_Central"/>
</dbReference>
<dbReference type="GO" id="GO:0006357">
    <property type="term" value="P:regulation of transcription by RNA polymerase II"/>
    <property type="evidence" value="ECO:0000318"/>
    <property type="project" value="GO_Central"/>
</dbReference>
<dbReference type="CDD" id="cd09919">
    <property type="entry name" value="SH2_STAT_family"/>
    <property type="match status" value="1"/>
</dbReference>
<dbReference type="CDD" id="cd14786">
    <property type="entry name" value="STAT_CCD"/>
    <property type="match status" value="1"/>
</dbReference>
<dbReference type="CDD" id="cd14801">
    <property type="entry name" value="STAT_DBD"/>
    <property type="match status" value="1"/>
</dbReference>
<dbReference type="FunFam" id="1.10.238.10:FF:000493">
    <property type="entry name" value="Signal transducer and activator of transcription"/>
    <property type="match status" value="1"/>
</dbReference>
<dbReference type="FunFam" id="2.60.40.630:FF:000005">
    <property type="entry name" value="Signal transducer and activator of transcription"/>
    <property type="match status" value="1"/>
</dbReference>
<dbReference type="FunFam" id="1.20.1050.20:FF:000007">
    <property type="entry name" value="Signal transducer and activator of transcription 1"/>
    <property type="match status" value="1"/>
</dbReference>
<dbReference type="FunFam" id="3.30.505.10:FF:000127">
    <property type="entry name" value="Signal transducer and activator of transcription 1"/>
    <property type="match status" value="1"/>
</dbReference>
<dbReference type="Gene3D" id="1.10.238.10">
    <property type="entry name" value="EF-hand"/>
    <property type="match status" value="1"/>
</dbReference>
<dbReference type="Gene3D" id="3.30.505.10">
    <property type="entry name" value="SH2 domain"/>
    <property type="match status" value="1"/>
</dbReference>
<dbReference type="Gene3D" id="1.20.1050.20">
    <property type="entry name" value="STAT transcription factor, all-alpha domain"/>
    <property type="match status" value="1"/>
</dbReference>
<dbReference type="Gene3D" id="2.60.40.630">
    <property type="entry name" value="STAT transcription factor, DNA-binding domain"/>
    <property type="match status" value="1"/>
</dbReference>
<dbReference type="InterPro" id="IPR008967">
    <property type="entry name" value="p53-like_TF_DNA-bd_sf"/>
</dbReference>
<dbReference type="InterPro" id="IPR036860">
    <property type="entry name" value="SH2_dom_sf"/>
</dbReference>
<dbReference type="InterPro" id="IPR001217">
    <property type="entry name" value="STAT"/>
</dbReference>
<dbReference type="InterPro" id="IPR048988">
    <property type="entry name" value="STAT_linker"/>
</dbReference>
<dbReference type="InterPro" id="IPR013800">
    <property type="entry name" value="STAT_TF_alpha"/>
</dbReference>
<dbReference type="InterPro" id="IPR015988">
    <property type="entry name" value="STAT_TF_coiled-coil"/>
</dbReference>
<dbReference type="InterPro" id="IPR013801">
    <property type="entry name" value="STAT_TF_DNA-bd"/>
</dbReference>
<dbReference type="InterPro" id="IPR012345">
    <property type="entry name" value="STAT_TF_DNA-bd_N"/>
</dbReference>
<dbReference type="PANTHER" id="PTHR11801">
    <property type="entry name" value="SIGNAL TRANSDUCER AND ACTIVATOR OF TRANSCRIPTION"/>
    <property type="match status" value="1"/>
</dbReference>
<dbReference type="Pfam" id="PF01017">
    <property type="entry name" value="STAT_alpha"/>
    <property type="match status" value="1"/>
</dbReference>
<dbReference type="Pfam" id="PF02864">
    <property type="entry name" value="STAT_bind"/>
    <property type="match status" value="1"/>
</dbReference>
<dbReference type="Pfam" id="PF21354">
    <property type="entry name" value="STAT_linker"/>
    <property type="match status" value="1"/>
</dbReference>
<dbReference type="SUPFAM" id="SSF49417">
    <property type="entry name" value="p53-like transcription factors"/>
    <property type="match status" value="1"/>
</dbReference>
<dbReference type="SUPFAM" id="SSF55550">
    <property type="entry name" value="SH2 domain"/>
    <property type="match status" value="1"/>
</dbReference>
<dbReference type="SUPFAM" id="SSF47655">
    <property type="entry name" value="STAT"/>
    <property type="match status" value="1"/>
</dbReference>
<comment type="function">
    <text evidence="1">Carries out a dual function: signal transduction and activation of transcription. Activated STAT proteins play a role in repression of dauer formation. Neuronal expression is held in check by negative signals through the TGF-beta pathway that target the daf-3 transcription factor (By similarity).</text>
</comment>
<comment type="subunit">
    <text evidence="2">Forms a homodimer or a heterodimer with a related family member.</text>
</comment>
<comment type="subcellular location">
    <subcellularLocation>
        <location evidence="1">Cytoplasm</location>
    </subcellularLocation>
    <subcellularLocation>
        <location evidence="1">Nucleus</location>
    </subcellularLocation>
    <text evidence="1">Translocated into the nucleus in response to phosphorylation.</text>
</comment>
<comment type="similarity">
    <text evidence="4">Belongs to the transcription factor STAT family.</text>
</comment>
<accession>Q61AP6</accession>
<accession>A8XIG5</accession>
<proteinExistence type="inferred from homology"/>
<name>STAT1_CAEBR</name>